<organism>
    <name type="scientific">Escherichia coli</name>
    <dbReference type="NCBI Taxonomy" id="562"/>
    <lineage>
        <taxon>Bacteria</taxon>
        <taxon>Pseudomonadati</taxon>
        <taxon>Pseudomonadota</taxon>
        <taxon>Gammaproteobacteria</taxon>
        <taxon>Enterobacterales</taxon>
        <taxon>Enterobacteriaceae</taxon>
        <taxon>Escherichia</taxon>
    </lineage>
</organism>
<comment type="function">
    <text>This protein is thought to be involved in the control of plasmid partition.</text>
</comment>
<gene>
    <name type="primary">stbB</name>
</gene>
<proteinExistence type="evidence at protein level"/>
<reference key="1">
    <citation type="journal article" date="1988" name="J. Mol. Biol.">
        <title>Genetic organization and nucleotide sequence of the stability locus of IncFII plasmid NR1.</title>
        <authorList>
            <person name="Tabuchi A."/>
            <person name="Min Y.-N."/>
            <person name="Kim C.K."/>
            <person name="Fan Y.-L."/>
            <person name="Womble D.D."/>
            <person name="Rownd R.H."/>
        </authorList>
    </citation>
    <scope>NUCLEOTIDE SEQUENCE [GENOMIC DNA]</scope>
    <source>
        <strain>KP245</strain>
        <plasmid>IncFII R100 (NR1)</plasmid>
    </source>
</reference>
<reference key="2">
    <citation type="journal article" date="1986" name="J. Mol. Biol.">
        <title>Partitioning of plasmid R1. Structural and functional analysis of the parA locus.</title>
        <authorList>
            <person name="Gerdes K."/>
            <person name="Molin S."/>
        </authorList>
    </citation>
    <scope>NUCLEOTIDE SEQUENCE [GENOMIC DNA] OF 1-60</scope>
    <source>
        <plasmid>IncFII R1</plasmid>
    </source>
</reference>
<dbReference type="EMBL" id="X12777">
    <property type="protein sequence ID" value="CAA31265.1"/>
    <property type="molecule type" value="Genomic_DNA"/>
</dbReference>
<dbReference type="EMBL" id="X04268">
    <property type="protein sequence ID" value="CAB37091.1"/>
    <property type="molecule type" value="Genomic_DNA"/>
</dbReference>
<dbReference type="RefSeq" id="NP_957569.1">
    <property type="nucleotide sequence ID" value="NC_005327.1"/>
</dbReference>
<dbReference type="RefSeq" id="YP_001096424.1">
    <property type="nucleotide sequence ID" value="NC_009133.1"/>
</dbReference>
<dbReference type="RefSeq" id="YP_003108259.1">
    <property type="nucleotide sequence ID" value="NC_013121.1"/>
</dbReference>
<dbReference type="RefSeq" id="YP_006953485.1">
    <property type="nucleotide sequence ID" value="NC_019073.1"/>
</dbReference>
<dbReference type="RefSeq" id="YP_006953910.1">
    <property type="nucleotide sequence ID" value="NC_019090.1"/>
</dbReference>
<dbReference type="RefSeq" id="YP_006954240.1">
    <property type="nucleotide sequence ID" value="NC_019095.1"/>
</dbReference>
<dbReference type="RefSeq" id="YP_006990722.1">
    <property type="nucleotide sequence ID" value="NC_019424.1"/>
</dbReference>
<dbReference type="RefSeq" id="YP_007447517.1">
    <property type="nucleotide sequence ID" value="NC_020278.2"/>
</dbReference>
<dbReference type="RefSeq" id="YP_009068578.1">
    <property type="nucleotide sequence ID" value="NC_025141.1"/>
</dbReference>
<dbReference type="PDB" id="4A62">
    <property type="method" value="X-ray"/>
    <property type="resolution" value="2.20 A"/>
    <property type="chains" value="C/D=101-117"/>
</dbReference>
<dbReference type="PDBsum" id="4A62"/>
<dbReference type="SMR" id="P11906"/>
<dbReference type="EvolutionaryTrace" id="P11906"/>
<dbReference type="GO" id="GO:0030541">
    <property type="term" value="P:plasmid partitioning"/>
    <property type="evidence" value="ECO:0007669"/>
    <property type="project" value="UniProtKB-KW"/>
</dbReference>
<dbReference type="Gene3D" id="6.10.290.20">
    <property type="match status" value="1"/>
</dbReference>
<dbReference type="InterPro" id="IPR019720">
    <property type="entry name" value="Plasmid_stability_protein_StbB"/>
</dbReference>
<dbReference type="InterPro" id="IPR038307">
    <property type="entry name" value="StbB_sf"/>
</dbReference>
<dbReference type="Pfam" id="PF10784">
    <property type="entry name" value="Plasmid_stab_B"/>
    <property type="match status" value="1"/>
</dbReference>
<protein>
    <recommendedName>
        <fullName>Protein StbB</fullName>
    </recommendedName>
</protein>
<geneLocation type="plasmid">
    <name>IncFII R100</name>
    <name>NR1</name>
</geneLocation>
<geneLocation type="plasmid">
    <name>IncFII R1</name>
</geneLocation>
<feature type="chain" id="PRO_0000068442" description="Protein StbB">
    <location>
        <begin position="1"/>
        <end position="117"/>
    </location>
</feature>
<feature type="region of interest" description="Disordered" evidence="1">
    <location>
        <begin position="92"/>
        <end position="117"/>
    </location>
</feature>
<feature type="helix" evidence="2">
    <location>
        <begin position="106"/>
        <end position="112"/>
    </location>
</feature>
<feature type="helix" evidence="2">
    <location>
        <begin position="113"/>
        <end position="115"/>
    </location>
</feature>
<evidence type="ECO:0000256" key="1">
    <source>
        <dbReference type="SAM" id="MobiDB-lite"/>
    </source>
</evidence>
<evidence type="ECO:0007829" key="2">
    <source>
        <dbReference type="PDB" id="4A62"/>
    </source>
</evidence>
<keyword id="KW-0002">3D-structure</keyword>
<keyword id="KW-0614">Plasmid</keyword>
<keyword id="KW-0616">Plasmid partition</keyword>
<name>STBB_ECOLX</name>
<sequence length="117" mass="13325">MMDKRRTIAFKLNPDVNQTDKIVCDTLDSIPQGERSRLNRAALTAGLALYRQDPRTPFLLCELLTKETTFSDIVNILRSLFPKEMADFNSSIVTQSSSQQEQKSDEETKKNAMKLIN</sequence>
<accession>P11906</accession>